<reference key="1">
    <citation type="submission" date="1997-11" db="EMBL/GenBank/DDBJ databases">
        <title>Sequence analysis of the gene coding proton-translocating ATPase of Streptococcus bovis.</title>
        <authorList>
            <person name="Umemori J."/>
            <person name="Miwa T."/>
            <person name="Nagamine T."/>
            <person name="Ogata K."/>
            <person name="Takenaka A."/>
            <person name="Hino T."/>
        </authorList>
    </citation>
    <scope>NUCLEOTIDE SEQUENCE [GENOMIC DNA]</scope>
    <source>
        <strain>ATCC 700410 / JB1</strain>
    </source>
</reference>
<accession>O50160</accession>
<organism>
    <name type="scientific">Streptococcus equinus</name>
    <name type="common">Streptococcus bovis</name>
    <dbReference type="NCBI Taxonomy" id="1335"/>
    <lineage>
        <taxon>Bacteria</taxon>
        <taxon>Bacillati</taxon>
        <taxon>Bacillota</taxon>
        <taxon>Bacilli</taxon>
        <taxon>Lactobacillales</taxon>
        <taxon>Streptococcaceae</taxon>
        <taxon>Streptococcus</taxon>
    </lineage>
</organism>
<protein>
    <recommendedName>
        <fullName evidence="1">ATP synthase epsilon chain</fullName>
    </recommendedName>
    <alternativeName>
        <fullName evidence="1">ATP synthase F1 sector epsilon subunit</fullName>
    </alternativeName>
    <alternativeName>
        <fullName evidence="1">F-ATPase epsilon subunit</fullName>
    </alternativeName>
</protein>
<name>ATPE_STREI</name>
<dbReference type="EMBL" id="AB009314">
    <property type="protein sequence ID" value="BAA23756.1"/>
    <property type="molecule type" value="Genomic_DNA"/>
</dbReference>
<dbReference type="RefSeq" id="WP_004231089.1">
    <property type="nucleotide sequence ID" value="NZ_UHHR01000001.1"/>
</dbReference>
<dbReference type="SMR" id="O50160"/>
<dbReference type="OrthoDB" id="9804110at2"/>
<dbReference type="GO" id="GO:0005886">
    <property type="term" value="C:plasma membrane"/>
    <property type="evidence" value="ECO:0007669"/>
    <property type="project" value="UniProtKB-SubCell"/>
</dbReference>
<dbReference type="GO" id="GO:0045259">
    <property type="term" value="C:proton-transporting ATP synthase complex"/>
    <property type="evidence" value="ECO:0007669"/>
    <property type="project" value="UniProtKB-KW"/>
</dbReference>
<dbReference type="GO" id="GO:0005524">
    <property type="term" value="F:ATP binding"/>
    <property type="evidence" value="ECO:0007669"/>
    <property type="project" value="UniProtKB-UniRule"/>
</dbReference>
<dbReference type="GO" id="GO:0046933">
    <property type="term" value="F:proton-transporting ATP synthase activity, rotational mechanism"/>
    <property type="evidence" value="ECO:0007669"/>
    <property type="project" value="UniProtKB-UniRule"/>
</dbReference>
<dbReference type="CDD" id="cd12152">
    <property type="entry name" value="F1-ATPase_delta"/>
    <property type="match status" value="1"/>
</dbReference>
<dbReference type="Gene3D" id="1.20.5.440">
    <property type="entry name" value="ATP synthase delta/epsilon subunit, C-terminal domain"/>
    <property type="match status" value="1"/>
</dbReference>
<dbReference type="Gene3D" id="2.60.15.10">
    <property type="entry name" value="F0F1 ATP synthase delta/epsilon subunit, N-terminal"/>
    <property type="match status" value="1"/>
</dbReference>
<dbReference type="HAMAP" id="MF_00530">
    <property type="entry name" value="ATP_synth_epsil_bac"/>
    <property type="match status" value="1"/>
</dbReference>
<dbReference type="InterPro" id="IPR036794">
    <property type="entry name" value="ATP_F1_dsu/esu_C_sf"/>
</dbReference>
<dbReference type="InterPro" id="IPR001469">
    <property type="entry name" value="ATP_synth_F1_dsu/esu"/>
</dbReference>
<dbReference type="InterPro" id="IPR020546">
    <property type="entry name" value="ATP_synth_F1_dsu/esu_N"/>
</dbReference>
<dbReference type="InterPro" id="IPR020547">
    <property type="entry name" value="ATP_synth_F1_esu_C"/>
</dbReference>
<dbReference type="InterPro" id="IPR036771">
    <property type="entry name" value="ATPsynth_dsu/esu_N"/>
</dbReference>
<dbReference type="NCBIfam" id="TIGR01216">
    <property type="entry name" value="ATP_synt_epsi"/>
    <property type="match status" value="1"/>
</dbReference>
<dbReference type="NCBIfam" id="NF001846">
    <property type="entry name" value="PRK00571.1-3"/>
    <property type="match status" value="1"/>
</dbReference>
<dbReference type="PANTHER" id="PTHR13822">
    <property type="entry name" value="ATP SYNTHASE DELTA/EPSILON CHAIN"/>
    <property type="match status" value="1"/>
</dbReference>
<dbReference type="PANTHER" id="PTHR13822:SF10">
    <property type="entry name" value="ATP SYNTHASE EPSILON CHAIN, CHLOROPLASTIC"/>
    <property type="match status" value="1"/>
</dbReference>
<dbReference type="Pfam" id="PF00401">
    <property type="entry name" value="ATP-synt_DE"/>
    <property type="match status" value="1"/>
</dbReference>
<dbReference type="Pfam" id="PF02823">
    <property type="entry name" value="ATP-synt_DE_N"/>
    <property type="match status" value="1"/>
</dbReference>
<dbReference type="SUPFAM" id="SSF46604">
    <property type="entry name" value="Epsilon subunit of F1F0-ATP synthase C-terminal domain"/>
    <property type="match status" value="1"/>
</dbReference>
<dbReference type="SUPFAM" id="SSF51344">
    <property type="entry name" value="Epsilon subunit of F1F0-ATP synthase N-terminal domain"/>
    <property type="match status" value="1"/>
</dbReference>
<feature type="chain" id="PRO_0000188213" description="ATP synthase epsilon chain">
    <location>
        <begin position="1"/>
        <end position="138"/>
    </location>
</feature>
<sequence length="138" mass="15633">MTFMTVQVVTPDGIRYDHHANFISVKTPDGEMGILPEHINLIAPLTVHEMKIHRTDDPNHVDWVAINGGIIEIKDNLVTIVADSAERERDIDVSRAERAKIRAERKLEQAQSTHDIDEVRRAQVALRRALNRISVGNK</sequence>
<evidence type="ECO:0000255" key="1">
    <source>
        <dbReference type="HAMAP-Rule" id="MF_00530"/>
    </source>
</evidence>
<proteinExistence type="inferred from homology"/>
<keyword id="KW-0066">ATP synthesis</keyword>
<keyword id="KW-1003">Cell membrane</keyword>
<keyword id="KW-0139">CF(1)</keyword>
<keyword id="KW-0375">Hydrogen ion transport</keyword>
<keyword id="KW-0406">Ion transport</keyword>
<keyword id="KW-0472">Membrane</keyword>
<keyword id="KW-0813">Transport</keyword>
<gene>
    <name evidence="1" type="primary">atpC</name>
</gene>
<comment type="function">
    <text evidence="1">Produces ATP from ADP in the presence of a proton gradient across the membrane.</text>
</comment>
<comment type="subunit">
    <text>F-type ATPases have 2 components, CF(1) - the catalytic core - and CF(0) - the membrane proton channel. CF(1) has five subunits: alpha(3), beta(3), gamma(1), delta(1), epsilon(1). CF(0) has three main subunits: a, b and c.</text>
</comment>
<comment type="subcellular location">
    <subcellularLocation>
        <location evidence="1">Cell membrane</location>
        <topology evidence="1">Peripheral membrane protein</topology>
    </subcellularLocation>
</comment>
<comment type="similarity">
    <text evidence="1">Belongs to the ATPase epsilon chain family.</text>
</comment>